<evidence type="ECO:0000255" key="1"/>
<evidence type="ECO:0000269" key="2">
    <source>
    </source>
</evidence>
<evidence type="ECO:0000305" key="3"/>
<evidence type="ECO:0007829" key="4">
    <source>
        <dbReference type="PDB" id="9C0S"/>
    </source>
</evidence>
<evidence type="ECO:0007829" key="5">
    <source>
        <dbReference type="PDB" id="9C0T"/>
    </source>
</evidence>
<protein>
    <recommendedName>
        <fullName>Acetyl-CoA decarbonylase/synthase complex subunit beta 2</fullName>
        <shortName>ACDS complex subunit beta 2</shortName>
        <ecNumber evidence="2">2.3.1.169</ecNumber>
    </recommendedName>
    <alternativeName>
        <fullName>ACDS complex acyltransferase 2</fullName>
    </alternativeName>
</protein>
<accession>Q9V2Z4</accession>
<feature type="chain" id="PRO_0000155107" description="Acetyl-CoA decarbonylase/synthase complex subunit beta 2">
    <location>
        <begin position="1"/>
        <end position="472"/>
    </location>
</feature>
<feature type="binding site" evidence="1">
    <location>
        <position position="189"/>
    </location>
    <ligand>
        <name>[Ni-Fe-S] cluster</name>
        <dbReference type="ChEBI" id="CHEBI:60400"/>
    </ligand>
</feature>
<feature type="binding site" evidence="1">
    <location>
        <position position="192"/>
    </location>
    <ligand>
        <name>[Ni-Fe-S] cluster</name>
        <dbReference type="ChEBI" id="CHEBI:60400"/>
    </ligand>
</feature>
<feature type="binding site" evidence="1">
    <location>
        <position position="278"/>
    </location>
    <ligand>
        <name>[Ni-Fe-S] cluster</name>
        <dbReference type="ChEBI" id="CHEBI:60400"/>
    </ligand>
</feature>
<feature type="binding site" evidence="1">
    <location>
        <position position="280"/>
    </location>
    <ligand>
        <name>[Ni-Fe-S] cluster</name>
        <dbReference type="ChEBI" id="CHEBI:60400"/>
    </ligand>
</feature>
<feature type="mutagenesis site" description="Loss of ability to bind iron." evidence="2">
    <original>C</original>
    <variation>S</variation>
    <location>
        <position position="189"/>
    </location>
</feature>
<feature type="mutagenesis site" description="Loss of ability to bind nickel; loss of activity." evidence="2">
    <original>C</original>
    <variation>S</variation>
    <location>
        <position position="278"/>
    </location>
</feature>
<feature type="mutagenesis site" description="Loss of ability to bind nickel; loss of activity." evidence="2">
    <original>C</original>
    <variation>S</variation>
    <location>
        <position position="280"/>
    </location>
</feature>
<feature type="mutagenesis site" description="No effect on nickel binding." evidence="2">
    <original>H</original>
    <variation>N</variation>
    <location>
        <position position="394"/>
    </location>
</feature>
<feature type="turn" evidence="4">
    <location>
        <begin position="10"/>
        <end position="13"/>
    </location>
</feature>
<feature type="helix" evidence="4">
    <location>
        <begin position="19"/>
        <end position="21"/>
    </location>
</feature>
<feature type="strand" evidence="4">
    <location>
        <begin position="22"/>
        <end position="31"/>
    </location>
</feature>
<feature type="strand" evidence="4">
    <location>
        <begin position="34"/>
        <end position="39"/>
    </location>
</feature>
<feature type="helix" evidence="5">
    <location>
        <begin position="42"/>
        <end position="44"/>
    </location>
</feature>
<feature type="strand" evidence="4">
    <location>
        <begin position="49"/>
        <end position="54"/>
    </location>
</feature>
<feature type="helix" evidence="4">
    <location>
        <begin position="57"/>
        <end position="59"/>
    </location>
</feature>
<feature type="strand" evidence="5">
    <location>
        <begin position="64"/>
        <end position="66"/>
    </location>
</feature>
<feature type="strand" evidence="4">
    <location>
        <begin position="69"/>
        <end position="75"/>
    </location>
</feature>
<feature type="helix" evidence="4">
    <location>
        <begin position="81"/>
        <end position="83"/>
    </location>
</feature>
<feature type="helix" evidence="4">
    <location>
        <begin position="84"/>
        <end position="95"/>
    </location>
</feature>
<feature type="strand" evidence="5">
    <location>
        <begin position="98"/>
        <end position="104"/>
    </location>
</feature>
<feature type="strand" evidence="4">
    <location>
        <begin position="111"/>
        <end position="115"/>
    </location>
</feature>
<feature type="helix" evidence="4">
    <location>
        <begin position="116"/>
        <end position="122"/>
    </location>
</feature>
<feature type="helix" evidence="4">
    <location>
        <begin position="126"/>
        <end position="139"/>
    </location>
</feature>
<feature type="strand" evidence="4">
    <location>
        <begin position="145"/>
        <end position="151"/>
    </location>
</feature>
<feature type="helix" evidence="4">
    <location>
        <begin position="154"/>
        <end position="177"/>
    </location>
</feature>
<feature type="strand" evidence="4">
    <location>
        <begin position="180"/>
        <end position="182"/>
    </location>
</feature>
<feature type="strand" evidence="4">
    <location>
        <begin position="184"/>
        <end position="189"/>
    </location>
</feature>
<feature type="helix" evidence="4">
    <location>
        <begin position="191"/>
        <end position="194"/>
    </location>
</feature>
<feature type="strand" evidence="4">
    <location>
        <begin position="201"/>
        <end position="204"/>
    </location>
</feature>
<feature type="strand" evidence="4">
    <location>
        <begin position="210"/>
        <end position="213"/>
    </location>
</feature>
<feature type="helix" evidence="4">
    <location>
        <begin position="216"/>
        <end position="225"/>
    </location>
</feature>
<feature type="strand" evidence="4">
    <location>
        <begin position="229"/>
        <end position="235"/>
    </location>
</feature>
<feature type="strand" evidence="4">
    <location>
        <begin position="238"/>
        <end position="241"/>
    </location>
</feature>
<feature type="turn" evidence="4">
    <location>
        <begin position="242"/>
        <end position="245"/>
    </location>
</feature>
<feature type="helix" evidence="4">
    <location>
        <begin position="248"/>
        <end position="257"/>
    </location>
</feature>
<feature type="strand" evidence="4">
    <location>
        <begin position="270"/>
        <end position="273"/>
    </location>
</feature>
<feature type="strand" evidence="4">
    <location>
        <begin position="282"/>
        <end position="288"/>
    </location>
</feature>
<feature type="turn" evidence="4">
    <location>
        <begin position="289"/>
        <end position="292"/>
    </location>
</feature>
<feature type="strand" evidence="4">
    <location>
        <begin position="293"/>
        <end position="298"/>
    </location>
</feature>
<feature type="helix" evidence="4">
    <location>
        <begin position="311"/>
        <end position="315"/>
    </location>
</feature>
<feature type="strand" evidence="4">
    <location>
        <begin position="328"/>
        <end position="330"/>
    </location>
</feature>
<feature type="helix" evidence="4">
    <location>
        <begin position="333"/>
        <end position="336"/>
    </location>
</feature>
<feature type="turn" evidence="4">
    <location>
        <begin position="338"/>
        <end position="341"/>
    </location>
</feature>
<feature type="helix" evidence="4">
    <location>
        <begin position="342"/>
        <end position="344"/>
    </location>
</feature>
<feature type="helix" evidence="4">
    <location>
        <begin position="346"/>
        <end position="349"/>
    </location>
</feature>
<feature type="strand" evidence="4">
    <location>
        <begin position="350"/>
        <end position="352"/>
    </location>
</feature>
<feature type="helix" evidence="4">
    <location>
        <begin position="355"/>
        <end position="361"/>
    </location>
</feature>
<feature type="turn" evidence="4">
    <location>
        <begin position="362"/>
        <end position="364"/>
    </location>
</feature>
<feature type="turn" evidence="4">
    <location>
        <begin position="367"/>
        <end position="369"/>
    </location>
</feature>
<feature type="helix" evidence="4">
    <location>
        <begin position="370"/>
        <end position="372"/>
    </location>
</feature>
<feature type="turn" evidence="4">
    <location>
        <begin position="376"/>
        <end position="378"/>
    </location>
</feature>
<feature type="helix" evidence="4">
    <location>
        <begin position="382"/>
        <end position="391"/>
    </location>
</feature>
<feature type="helix" evidence="4">
    <location>
        <begin position="395"/>
        <end position="397"/>
    </location>
</feature>
<name>ACDB2_METTE</name>
<dbReference type="EC" id="2.3.1.169" evidence="2"/>
<dbReference type="EMBL" id="AF173830">
    <property type="protein sequence ID" value="AAD51814.3"/>
    <property type="molecule type" value="Genomic_DNA"/>
</dbReference>
<dbReference type="PDB" id="9C0S">
    <property type="method" value="EM"/>
    <property type="resolution" value="3.20 A"/>
    <property type="chains" value="E=1-472"/>
</dbReference>
<dbReference type="PDB" id="9C0T">
    <property type="method" value="EM"/>
    <property type="resolution" value="3.20 A"/>
    <property type="chains" value="E/F=1-472"/>
</dbReference>
<dbReference type="PDBsum" id="9C0S"/>
<dbReference type="PDBsum" id="9C0T"/>
<dbReference type="EMDB" id="EMD-45091"/>
<dbReference type="EMDB" id="EMD-45092"/>
<dbReference type="SMR" id="Q9V2Z4"/>
<dbReference type="UniPathway" id="UPA00642"/>
<dbReference type="GO" id="GO:0016407">
    <property type="term" value="F:acetyltransferase activity"/>
    <property type="evidence" value="ECO:0007669"/>
    <property type="project" value="UniProtKB-UniRule"/>
</dbReference>
<dbReference type="GO" id="GO:0043885">
    <property type="term" value="F:anaerobic carbon-monoxide dehydrogenase activity"/>
    <property type="evidence" value="ECO:0000314"/>
    <property type="project" value="MENGO"/>
</dbReference>
<dbReference type="GO" id="GO:0043884">
    <property type="term" value="F:CO-methylating acetyl-CoA synthase activity"/>
    <property type="evidence" value="ECO:0007669"/>
    <property type="project" value="UniProtKB-EC"/>
</dbReference>
<dbReference type="GO" id="GO:0005506">
    <property type="term" value="F:iron ion binding"/>
    <property type="evidence" value="ECO:0007669"/>
    <property type="project" value="UniProtKB-UniRule"/>
</dbReference>
<dbReference type="GO" id="GO:0051536">
    <property type="term" value="F:iron-sulfur cluster binding"/>
    <property type="evidence" value="ECO:0007669"/>
    <property type="project" value="UniProtKB-KW"/>
</dbReference>
<dbReference type="GO" id="GO:0016151">
    <property type="term" value="F:nickel cation binding"/>
    <property type="evidence" value="ECO:0007669"/>
    <property type="project" value="UniProtKB-UniRule"/>
</dbReference>
<dbReference type="GO" id="GO:0006084">
    <property type="term" value="P:acetyl-CoA metabolic process"/>
    <property type="evidence" value="ECO:0007669"/>
    <property type="project" value="InterPro"/>
</dbReference>
<dbReference type="GO" id="GO:0019385">
    <property type="term" value="P:methanogenesis, from acetate"/>
    <property type="evidence" value="ECO:0007669"/>
    <property type="project" value="UniProtKB-UniRule"/>
</dbReference>
<dbReference type="FunFam" id="3.40.970.20:FF:000001">
    <property type="entry name" value="Acetyl-CoA decarbonylase/synthase complex subunit beta"/>
    <property type="match status" value="1"/>
</dbReference>
<dbReference type="Gene3D" id="3.30.1650.10">
    <property type="entry name" value="Bifunctional carbon monoxide dehydrogenase/acetyl-coa synthase(codh/acs), Chain M, domain 3"/>
    <property type="match status" value="1"/>
</dbReference>
<dbReference type="Gene3D" id="3.40.1470.10">
    <property type="entry name" value="Bifunctional carbon monoxide dehydrogenase/acetyl-coa synthase(codh/acs), Chain M, domain 5"/>
    <property type="match status" value="1"/>
</dbReference>
<dbReference type="Gene3D" id="3.40.970.20">
    <property type="entry name" value="Carbon monoxide dehydrogenase alpha subunit. Chain D, domain 4"/>
    <property type="match status" value="1"/>
</dbReference>
<dbReference type="HAMAP" id="MF_01138">
    <property type="entry name" value="CdhC"/>
    <property type="match status" value="1"/>
</dbReference>
<dbReference type="InterPro" id="IPR045822">
    <property type="entry name" value="ACS_CODH_B_C"/>
</dbReference>
<dbReference type="InterPro" id="IPR004461">
    <property type="entry name" value="CO_DH/Ac-CoA_synth_bsu"/>
</dbReference>
<dbReference type="InterPro" id="IPR038571">
    <property type="entry name" value="CO_DH/Ac-CoA_synth_bsu_3_sf"/>
</dbReference>
<dbReference type="InterPro" id="IPR023432">
    <property type="entry name" value="CO_DH/Ac-CoA_synth_bsu_arc"/>
</dbReference>
<dbReference type="InterPro" id="IPR011254">
    <property type="entry name" value="Prismane-like_sf"/>
</dbReference>
<dbReference type="NCBIfam" id="TIGR00316">
    <property type="entry name" value="cdhC"/>
    <property type="match status" value="1"/>
</dbReference>
<dbReference type="NCBIfam" id="NF003379">
    <property type="entry name" value="PRK04456.1"/>
    <property type="match status" value="1"/>
</dbReference>
<dbReference type="PANTHER" id="PTHR42281">
    <property type="match status" value="1"/>
</dbReference>
<dbReference type="PANTHER" id="PTHR42281:SF1">
    <property type="entry name" value="ACETYL-COA DECARBONYLASE_SYNTHASE COMPLEX SUBUNIT BETA 1"/>
    <property type="match status" value="1"/>
</dbReference>
<dbReference type="Pfam" id="PF19436">
    <property type="entry name" value="ACS_CODH_B_C"/>
    <property type="match status" value="1"/>
</dbReference>
<dbReference type="Pfam" id="PF03598">
    <property type="entry name" value="CdhC"/>
    <property type="match status" value="1"/>
</dbReference>
<dbReference type="SUPFAM" id="SSF56821">
    <property type="entry name" value="Prismane protein-like"/>
    <property type="match status" value="1"/>
</dbReference>
<organism>
    <name type="scientific">Methanosarcina thermophila</name>
    <dbReference type="NCBI Taxonomy" id="2210"/>
    <lineage>
        <taxon>Archaea</taxon>
        <taxon>Methanobacteriati</taxon>
        <taxon>Methanobacteriota</taxon>
        <taxon>Stenosarchaea group</taxon>
        <taxon>Methanomicrobia</taxon>
        <taxon>Methanosarcinales</taxon>
        <taxon>Methanosarcinaceae</taxon>
        <taxon>Methanosarcina</taxon>
    </lineage>
</organism>
<keyword id="KW-0002">3D-structure</keyword>
<keyword id="KW-0012">Acyltransferase</keyword>
<keyword id="KW-0408">Iron</keyword>
<keyword id="KW-0411">Iron-sulfur</keyword>
<keyword id="KW-0479">Metal-binding</keyword>
<keyword id="KW-0484">Methanogenesis</keyword>
<keyword id="KW-0533">Nickel</keyword>
<keyword id="KW-0808">Transferase</keyword>
<gene>
    <name type="primary">cdhC2</name>
</gene>
<comment type="function">
    <text evidence="2">Part of a complex that catalyzes the reversible cleavage of acetyl-CoA, allowing growth on acetate as sole source of carbon and energy. The alpha-epsilon complex generates CO from CO(2), while the beta subunit (this protein) combines the CO with CoA and a methyl group to form acetyl-CoA. The methyl group, which is incorporated into acetyl-CoA, is transferred to the beta subunit by a corrinoid iron-sulfur protein (the gamma-delta complex).</text>
</comment>
<comment type="catalytic activity">
    <reaction evidence="2">
        <text>Co(I)-[corrinoid Fe-S protein] + acetyl-CoA + H(+) = methyl-Co(III)-[corrinoid Fe-S protein] + CO + CoA</text>
        <dbReference type="Rhea" id="RHEA:45212"/>
        <dbReference type="Rhea" id="RHEA-COMP:11110"/>
        <dbReference type="Rhea" id="RHEA-COMP:11111"/>
        <dbReference type="ChEBI" id="CHEBI:15378"/>
        <dbReference type="ChEBI" id="CHEBI:17245"/>
        <dbReference type="ChEBI" id="CHEBI:57287"/>
        <dbReference type="ChEBI" id="CHEBI:57288"/>
        <dbReference type="ChEBI" id="CHEBI:85033"/>
        <dbReference type="ChEBI" id="CHEBI:85035"/>
        <dbReference type="EC" id="2.3.1.169"/>
    </reaction>
</comment>
<comment type="cofactor">
    <cofactor>
        <name>[Ni-Fe-S] cluster</name>
        <dbReference type="ChEBI" id="CHEBI:60400"/>
    </cofactor>
    <text>Binds 1 [Ni-Fe-S] cluster.</text>
</comment>
<comment type="pathway">
    <text>One-carbon metabolism; methanogenesis from acetate.</text>
</comment>
<comment type="subunit">
    <text evidence="3">Monomer. The ACDS complex is made up of alpha, epsilon, beta, gamma and delta chains with a probable stoichiometry of (alpha(2)epsilon(2))(4)-beta(8)-(gamma(1)delta(1))(8) (Potential).</text>
</comment>
<comment type="similarity">
    <text evidence="3">Belongs to the CdhC family.</text>
</comment>
<sequence>MSEFPFEISPMFEGERVRKEGMFVELGGPKSLGLELVRAKPMDEIEDGKVTIVGPDLKDMEEGKTYPWAMIFHVGGELVEPDLESVIERRVHDFINYCQGIMHLNQRYDVWMRISKDTAAKMDSFEPFGKAVMMLFKTELPFIEKMQVTFYTDQAEVEKQMAEAMEIFKARDARTKDLHDEDVDVFYGCTLCQSFAPTNVCVVSPDRVSLCGAINWFDGRAAAKVDPEGPQFAIEKGELLDAKTGEYSGVNEVAKKLSSGEFDKIKLHSFFDAPHTSCGCFEVVGFYIPEVDGIGWVNREYQGMAPNGLGFSTMAGQTGGGKQIVGFLGIGINYFYSPKFIQADGGWNRVVWLPSMLKEKIDEAIPDDMKDKIATEKDVTDIESLKTFLKEKNHPVVANWAAEAEEEEEEEEEEEEVAAEAAPMMMPAAGFQMPAMPAMPMMSGGAGGIKLTFKNAKITIDRMIISEKKEKK</sequence>
<proteinExistence type="evidence at protein level"/>
<reference key="1">
    <citation type="journal article" date="2003" name="J. Biol. Chem.">
        <title>Nickel in subunit beta of the acetyl-CoA decarbonylase/synthase multienzyme complex in methanogens. Catalytic properties and evidence for a binuclear Ni-Ni site.</title>
        <authorList>
            <person name="Gencic S."/>
            <person name="Grahame D.A."/>
        </authorList>
    </citation>
    <scope>NUCLEOTIDE SEQUENCE [GENOMIC DNA]</scope>
    <scope>FUNCTION</scope>
    <scope>CATALYTIC ACTIVITY</scope>
    <scope>EPR SPECTROSCOPY</scope>
    <scope>CHARACTERIZATION</scope>
    <scope>MUTAGENESIS OF CYS-189; CYS-278; CYS-280 AND HIS-394</scope>
    <source>
        <strain>ATCC 43570 / DSM 1825 / OCM 12 / TM-1</strain>
    </source>
</reference>
<reference key="2">
    <citation type="submission" date="2015-10" db="EMBL/GenBank/DDBJ databases">
        <authorList>
            <person name="Gencic S."/>
            <person name="Grahame D.A."/>
        </authorList>
    </citation>
    <scope>SEQUENCE REVISION TO POSITION 283 AND 412</scope>
    <source>
        <strain>ATCC 43570 / DSM 1825 / OCM 12 / TM-1</strain>
    </source>
</reference>